<sequence length="165" mass="17922">MSTLINGTSLGNLLIVTGSFILLLLLVKKFAWSQLAAIFKAREEKIAKDIDDAENSRQNAQVLENKRQVELNQAKDEAAQIIDNAKETGKAQESKIITEAHEEAGRLKDKANQDIATSKAEALSSVKADVADLSVLLAEKIMAKNLDKTAQGDLIDSYLDKLGDA</sequence>
<comment type="function">
    <text evidence="1">F(1)F(0) ATP synthase produces ATP from ADP in the presence of a proton or sodium gradient. F-type ATPases consist of two structural domains, F(1) containing the extramembraneous catalytic core and F(0) containing the membrane proton channel, linked together by a central stalk and a peripheral stalk. During catalysis, ATP synthesis in the catalytic domain of F(1) is coupled via a rotary mechanism of the central stalk subunits to proton translocation.</text>
</comment>
<comment type="function">
    <text evidence="1">Component of the F(0) channel, it forms part of the peripheral stalk, linking F(1) to F(0).</text>
</comment>
<comment type="subunit">
    <text evidence="1">F-type ATPases have 2 components, F(1) - the catalytic core - and F(0) - the membrane proton channel. F(1) has five subunits: alpha(3), beta(3), gamma(1), delta(1), epsilon(1). F(0) has three main subunits: a(1), b(2) and c(10-14). The alpha and beta chains form an alternating ring which encloses part of the gamma chain. F(1) is attached to F(0) by a central stalk formed by the gamma and epsilon chains, while a peripheral stalk is formed by the delta and b chains.</text>
</comment>
<comment type="subcellular location">
    <subcellularLocation>
        <location evidence="1">Cell membrane</location>
        <topology evidence="1">Single-pass membrane protein</topology>
    </subcellularLocation>
</comment>
<comment type="similarity">
    <text evidence="1">Belongs to the ATPase B chain family.</text>
</comment>
<accession>P95785</accession>
<gene>
    <name evidence="1" type="primary">atpF</name>
    <name type="ordered locus">SMU_1532</name>
</gene>
<organism>
    <name type="scientific">Streptococcus mutans serotype c (strain ATCC 700610 / UA159)</name>
    <dbReference type="NCBI Taxonomy" id="210007"/>
    <lineage>
        <taxon>Bacteria</taxon>
        <taxon>Bacillati</taxon>
        <taxon>Bacillota</taxon>
        <taxon>Bacilli</taxon>
        <taxon>Lactobacillales</taxon>
        <taxon>Streptococcaceae</taxon>
        <taxon>Streptococcus</taxon>
    </lineage>
</organism>
<proteinExistence type="inferred from homology"/>
<protein>
    <recommendedName>
        <fullName evidence="1">ATP synthase subunit b</fullName>
    </recommendedName>
    <alternativeName>
        <fullName evidence="1">ATP synthase F(0) sector subunit b</fullName>
    </alternativeName>
    <alternativeName>
        <fullName evidence="1">ATPase subunit I</fullName>
    </alternativeName>
    <alternativeName>
        <fullName evidence="1">F-type ATPase subunit b</fullName>
        <shortName evidence="1">F-ATPase subunit b</shortName>
    </alternativeName>
</protein>
<feature type="chain" id="PRO_0000082388" description="ATP synthase subunit b">
    <location>
        <begin position="1"/>
        <end position="165"/>
    </location>
</feature>
<feature type="transmembrane region" description="Helical" evidence="1">
    <location>
        <begin position="7"/>
        <end position="27"/>
    </location>
</feature>
<feature type="sequence conflict" description="In Ref. 1; AAD13379." evidence="2" ref="1">
    <original>A</original>
    <variation>T</variation>
    <location>
        <position position="41"/>
    </location>
</feature>
<evidence type="ECO:0000255" key="1">
    <source>
        <dbReference type="HAMAP-Rule" id="MF_01398"/>
    </source>
</evidence>
<evidence type="ECO:0000305" key="2"/>
<name>ATPF_STRMU</name>
<reference key="1">
    <citation type="journal article" date="1996" name="Gene">
        <title>Cloning and nucleotide sequence analysis of the Streptococcus mutans membrane-bound, proton-translocating ATPase operon.</title>
        <authorList>
            <person name="Smith A.J."/>
            <person name="Quivey R.G."/>
            <person name="Faustoferri R.C."/>
        </authorList>
    </citation>
    <scope>NUCLEOTIDE SEQUENCE [GENOMIC DNA]</scope>
    <source>
        <strain>GS-5</strain>
    </source>
</reference>
<reference key="2">
    <citation type="journal article" date="2002" name="Proc. Natl. Acad. Sci. U.S.A.">
        <title>Genome sequence of Streptococcus mutans UA159, a cariogenic dental pathogen.</title>
        <authorList>
            <person name="Ajdic D.J."/>
            <person name="McShan W.M."/>
            <person name="McLaughlin R.E."/>
            <person name="Savic G."/>
            <person name="Chang J."/>
            <person name="Carson M.B."/>
            <person name="Primeaux C."/>
            <person name="Tian R."/>
            <person name="Kenton S."/>
            <person name="Jia H.G."/>
            <person name="Lin S.P."/>
            <person name="Qian Y."/>
            <person name="Li S."/>
            <person name="Zhu H."/>
            <person name="Najar F.Z."/>
            <person name="Lai H."/>
            <person name="White J."/>
            <person name="Roe B.A."/>
            <person name="Ferretti J.J."/>
        </authorList>
    </citation>
    <scope>NUCLEOTIDE SEQUENCE [LARGE SCALE GENOMIC DNA]</scope>
    <source>
        <strain>ATCC 700610 / UA159</strain>
    </source>
</reference>
<dbReference type="EMBL" id="U31170">
    <property type="protein sequence ID" value="AAD13379.1"/>
    <property type="molecule type" value="Genomic_DNA"/>
</dbReference>
<dbReference type="EMBL" id="AE014133">
    <property type="protein sequence ID" value="AAN59182.1"/>
    <property type="molecule type" value="Genomic_DNA"/>
</dbReference>
<dbReference type="PIR" id="JC5737">
    <property type="entry name" value="JC5737"/>
</dbReference>
<dbReference type="RefSeq" id="NP_721876.1">
    <property type="nucleotide sequence ID" value="NC_004350.2"/>
</dbReference>
<dbReference type="RefSeq" id="WP_002262944.1">
    <property type="nucleotide sequence ID" value="NC_004350.2"/>
</dbReference>
<dbReference type="SMR" id="P95785"/>
<dbReference type="STRING" id="210007.SMU_1532"/>
<dbReference type="KEGG" id="smu:SMU_1532"/>
<dbReference type="PATRIC" id="fig|210007.7.peg.1364"/>
<dbReference type="eggNOG" id="COG0711">
    <property type="taxonomic scope" value="Bacteria"/>
</dbReference>
<dbReference type="HOGENOM" id="CLU_079215_4_2_9"/>
<dbReference type="OrthoDB" id="282095at2"/>
<dbReference type="PhylomeDB" id="P95785"/>
<dbReference type="SABIO-RK" id="P95785"/>
<dbReference type="Proteomes" id="UP000002512">
    <property type="component" value="Chromosome"/>
</dbReference>
<dbReference type="GO" id="GO:0005886">
    <property type="term" value="C:plasma membrane"/>
    <property type="evidence" value="ECO:0007669"/>
    <property type="project" value="UniProtKB-SubCell"/>
</dbReference>
<dbReference type="GO" id="GO:0045259">
    <property type="term" value="C:proton-transporting ATP synthase complex"/>
    <property type="evidence" value="ECO:0007669"/>
    <property type="project" value="UniProtKB-KW"/>
</dbReference>
<dbReference type="GO" id="GO:0046933">
    <property type="term" value="F:proton-transporting ATP synthase activity, rotational mechanism"/>
    <property type="evidence" value="ECO:0007669"/>
    <property type="project" value="UniProtKB-UniRule"/>
</dbReference>
<dbReference type="GO" id="GO:0046961">
    <property type="term" value="F:proton-transporting ATPase activity, rotational mechanism"/>
    <property type="evidence" value="ECO:0007669"/>
    <property type="project" value="TreeGrafter"/>
</dbReference>
<dbReference type="CDD" id="cd06503">
    <property type="entry name" value="ATP-synt_Fo_b"/>
    <property type="match status" value="1"/>
</dbReference>
<dbReference type="Gene3D" id="6.10.250.1580">
    <property type="match status" value="1"/>
</dbReference>
<dbReference type="HAMAP" id="MF_01398">
    <property type="entry name" value="ATP_synth_b_bprime"/>
    <property type="match status" value="1"/>
</dbReference>
<dbReference type="InterPro" id="IPR028987">
    <property type="entry name" value="ATP_synth_B-like_membr_sf"/>
</dbReference>
<dbReference type="InterPro" id="IPR002146">
    <property type="entry name" value="ATP_synth_b/b'su_bac/chlpt"/>
</dbReference>
<dbReference type="InterPro" id="IPR005864">
    <property type="entry name" value="ATP_synth_F0_bsu_bac"/>
</dbReference>
<dbReference type="InterPro" id="IPR050059">
    <property type="entry name" value="ATP_synthase_B_chain"/>
</dbReference>
<dbReference type="NCBIfam" id="TIGR01144">
    <property type="entry name" value="ATP_synt_b"/>
    <property type="match status" value="1"/>
</dbReference>
<dbReference type="PANTHER" id="PTHR33445:SF1">
    <property type="entry name" value="ATP SYNTHASE SUBUNIT B"/>
    <property type="match status" value="1"/>
</dbReference>
<dbReference type="PANTHER" id="PTHR33445">
    <property type="entry name" value="ATP SYNTHASE SUBUNIT B', CHLOROPLASTIC"/>
    <property type="match status" value="1"/>
</dbReference>
<dbReference type="Pfam" id="PF00430">
    <property type="entry name" value="ATP-synt_B"/>
    <property type="match status" value="1"/>
</dbReference>
<dbReference type="SUPFAM" id="SSF81573">
    <property type="entry name" value="F1F0 ATP synthase subunit B, membrane domain"/>
    <property type="match status" value="1"/>
</dbReference>
<keyword id="KW-0066">ATP synthesis</keyword>
<keyword id="KW-1003">Cell membrane</keyword>
<keyword id="KW-0138">CF(0)</keyword>
<keyword id="KW-0375">Hydrogen ion transport</keyword>
<keyword id="KW-0406">Ion transport</keyword>
<keyword id="KW-0472">Membrane</keyword>
<keyword id="KW-1185">Reference proteome</keyword>
<keyword id="KW-0812">Transmembrane</keyword>
<keyword id="KW-1133">Transmembrane helix</keyword>
<keyword id="KW-0813">Transport</keyword>